<evidence type="ECO:0000250" key="1">
    <source>
        <dbReference type="UniProtKB" id="P01031"/>
    </source>
</evidence>
<evidence type="ECO:0000255" key="2">
    <source>
        <dbReference type="PROSITE-ProRule" id="PRU00022"/>
    </source>
</evidence>
<evidence type="ECO:0000269" key="3">
    <source>
    </source>
</evidence>
<evidence type="ECO:0000269" key="4">
    <source>
    </source>
</evidence>
<evidence type="ECO:0007744" key="5">
    <source>
        <dbReference type="PDB" id="1C5A"/>
    </source>
</evidence>
<evidence type="ECO:0007829" key="6">
    <source>
        <dbReference type="PDB" id="1C5A"/>
    </source>
</evidence>
<dbReference type="PIR" id="A01268">
    <property type="entry name" value="A01268"/>
</dbReference>
<dbReference type="PDB" id="1C5A">
    <property type="method" value="NMR"/>
    <property type="chains" value="A=1-73"/>
</dbReference>
<dbReference type="PDBsum" id="1C5A"/>
<dbReference type="BMRB" id="P01032"/>
<dbReference type="SMR" id="P01032"/>
<dbReference type="STRING" id="9823.ENSSSCP00000043852"/>
<dbReference type="MEROPS" id="I39.952"/>
<dbReference type="PaxDb" id="9823-ENSSSCP00000005908"/>
<dbReference type="PeptideAtlas" id="P01032"/>
<dbReference type="eggNOG" id="KOG1366">
    <property type="taxonomic scope" value="Eukaryota"/>
</dbReference>
<dbReference type="InParanoid" id="P01032"/>
<dbReference type="EvolutionaryTrace" id="P01032"/>
<dbReference type="Proteomes" id="UP000008227">
    <property type="component" value="Unplaced"/>
</dbReference>
<dbReference type="Proteomes" id="UP000314985">
    <property type="component" value="Unplaced"/>
</dbReference>
<dbReference type="Proteomes" id="UP000694570">
    <property type="component" value="Unplaced"/>
</dbReference>
<dbReference type="Proteomes" id="UP000694571">
    <property type="component" value="Unplaced"/>
</dbReference>
<dbReference type="Proteomes" id="UP000694720">
    <property type="component" value="Unplaced"/>
</dbReference>
<dbReference type="Proteomes" id="UP000694722">
    <property type="component" value="Unplaced"/>
</dbReference>
<dbReference type="Proteomes" id="UP000694723">
    <property type="component" value="Unplaced"/>
</dbReference>
<dbReference type="Proteomes" id="UP000694724">
    <property type="component" value="Unplaced"/>
</dbReference>
<dbReference type="Proteomes" id="UP000694725">
    <property type="component" value="Unplaced"/>
</dbReference>
<dbReference type="Proteomes" id="UP000694726">
    <property type="component" value="Unplaced"/>
</dbReference>
<dbReference type="Proteomes" id="UP000694727">
    <property type="component" value="Unplaced"/>
</dbReference>
<dbReference type="Proteomes" id="UP000694728">
    <property type="component" value="Unplaced"/>
</dbReference>
<dbReference type="GO" id="GO:0005576">
    <property type="term" value="C:extracellular region"/>
    <property type="evidence" value="ECO:0007669"/>
    <property type="project" value="UniProtKB-SubCell"/>
</dbReference>
<dbReference type="GO" id="GO:0006957">
    <property type="term" value="P:complement activation, alternative pathway"/>
    <property type="evidence" value="ECO:0007669"/>
    <property type="project" value="UniProtKB-KW"/>
</dbReference>
<dbReference type="GO" id="GO:0006958">
    <property type="term" value="P:complement activation, classical pathway"/>
    <property type="evidence" value="ECO:0007669"/>
    <property type="project" value="UniProtKB-KW"/>
</dbReference>
<dbReference type="GO" id="GO:0006954">
    <property type="term" value="P:inflammatory response"/>
    <property type="evidence" value="ECO:0007669"/>
    <property type="project" value="UniProtKB-KW"/>
</dbReference>
<dbReference type="CDD" id="cd00017">
    <property type="entry name" value="ANATO"/>
    <property type="match status" value="1"/>
</dbReference>
<dbReference type="Gene3D" id="1.20.91.20">
    <property type="entry name" value="Anaphylotoxins (complement system)"/>
    <property type="match status" value="1"/>
</dbReference>
<dbReference type="InterPro" id="IPR000020">
    <property type="entry name" value="Anaphylatoxin/fibulin"/>
</dbReference>
<dbReference type="InterPro" id="IPR018081">
    <property type="entry name" value="Anaphylatoxin_comp_syst"/>
</dbReference>
<dbReference type="InterPro" id="IPR001840">
    <property type="entry name" value="Anaphylatoxn_comp_syst_dom"/>
</dbReference>
<dbReference type="Pfam" id="PF01821">
    <property type="entry name" value="ANATO"/>
    <property type="match status" value="1"/>
</dbReference>
<dbReference type="PRINTS" id="PR00004">
    <property type="entry name" value="ANAPHYLATOXN"/>
</dbReference>
<dbReference type="SMART" id="SM00104">
    <property type="entry name" value="ANATO"/>
    <property type="match status" value="1"/>
</dbReference>
<dbReference type="SUPFAM" id="SSF47686">
    <property type="entry name" value="Anaphylotoxins (complement system)"/>
    <property type="match status" value="1"/>
</dbReference>
<dbReference type="PROSITE" id="PS01177">
    <property type="entry name" value="ANAPHYLATOXIN_1"/>
    <property type="match status" value="1"/>
</dbReference>
<dbReference type="PROSITE" id="PS01178">
    <property type="entry name" value="ANAPHYLATOXIN_2"/>
    <property type="match status" value="1"/>
</dbReference>
<comment type="function">
    <text evidence="1">Mediator of local inflammatory process released following cleavage by C5 convertase. Acts by binding to its receptor (C5AR1 or C5AR2), activating G protein-coupled receptor signaling and inducing a variety of responses including intracellular calcium release, contraction of smooth muscle, increased vascular permeability, and histamine release from mast cells and basophilic leukocytes. C5a is also a potent chemokine which stimulates the locomotion of polymorphonuclear leukocytes and directs their migration toward sites of inflammation.</text>
</comment>
<comment type="subcellular location">
    <subcellularLocation>
        <location evidence="4">Secreted</location>
    </subcellularLocation>
</comment>
<sequence>MLQKKIEEEAAKYKYAMLKKCCYDGAYRNDDETCEERAARIKIGPKCVKAFKDCCYIANQVRAEQSHKNIQLGR</sequence>
<accession>P01032</accession>
<organism>
    <name type="scientific">Sus scrofa</name>
    <name type="common">Pig</name>
    <dbReference type="NCBI Taxonomy" id="9823"/>
    <lineage>
        <taxon>Eukaryota</taxon>
        <taxon>Metazoa</taxon>
        <taxon>Chordata</taxon>
        <taxon>Craniata</taxon>
        <taxon>Vertebrata</taxon>
        <taxon>Euteleostomi</taxon>
        <taxon>Mammalia</taxon>
        <taxon>Eutheria</taxon>
        <taxon>Laurasiatheria</taxon>
        <taxon>Artiodactyla</taxon>
        <taxon>Suina</taxon>
        <taxon>Suidae</taxon>
        <taxon>Sus</taxon>
    </lineage>
</organism>
<name>CO5_PIG</name>
<feature type="chain" id="PRO_0000048521" description="Complement C5a anaphylatoxin" evidence="4">
    <location>
        <begin position="1"/>
        <end position="74"/>
    </location>
</feature>
<feature type="domain" description="Anaphylatoxin-like" evidence="2">
    <location>
        <begin position="21"/>
        <end position="55"/>
    </location>
</feature>
<feature type="region of interest" description="Involved in C5AR1 binding" evidence="1">
    <location>
        <begin position="15"/>
        <end position="44"/>
    </location>
</feature>
<feature type="region of interest" description="Required for 90% of C5a activity; although Arg-74 is not essential">
    <location>
        <begin position="72"/>
        <end position="74"/>
    </location>
</feature>
<feature type="disulfide bond" evidence="3 5">
    <location>
        <begin position="21"/>
        <end position="47"/>
    </location>
</feature>
<feature type="disulfide bond" evidence="3 5">
    <location>
        <begin position="22"/>
        <end position="54"/>
    </location>
</feature>
<feature type="disulfide bond" evidence="3 5">
    <location>
        <begin position="34"/>
        <end position="55"/>
    </location>
</feature>
<feature type="helix" evidence="6">
    <location>
        <begin position="2"/>
        <end position="11"/>
    </location>
</feature>
<feature type="helix" evidence="6">
    <location>
        <begin position="16"/>
        <end position="26"/>
    </location>
</feature>
<feature type="helix" evidence="6">
    <location>
        <begin position="34"/>
        <end position="40"/>
    </location>
</feature>
<feature type="helix" evidence="6">
    <location>
        <begin position="45"/>
        <end position="62"/>
    </location>
</feature>
<protein>
    <recommendedName>
        <fullName>Complement C5a anaphylatoxin</fullName>
    </recommendedName>
</protein>
<proteinExistence type="evidence at protein level"/>
<reference key="1">
    <citation type="journal article" date="1980" name="J. Biol. Chem.">
        <title>Amino acid sequence of the anaphylatoxin from the fifth component of porcine complement.</title>
        <authorList>
            <person name="Gerard C."/>
            <person name="Hugli T.E."/>
        </authorList>
    </citation>
    <scope>PROTEIN SEQUENCE</scope>
    <scope>SUBCELLULAR LOCATION</scope>
</reference>
<reference key="2">
    <citation type="journal article" date="1981" name="Proc. Natl. Acad. Sci. U.S.A.">
        <title>Identification of classical anaphylatoxin as the des-Arg form of the C5a molecule: evidence of a modulator role for the oligosaccharide unit in human des-Arg74-C5a.</title>
        <authorList>
            <person name="Gerard C."/>
            <person name="Hugli T.E."/>
        </authorList>
    </citation>
    <scope>ACTIVE REGION</scope>
</reference>
<reference key="3">
    <citation type="journal article" date="1990" name="Biochemistry">
        <title>Three-dimensional structure of porcine C5adesArg from 1H nuclear magnetic resonance data.</title>
        <authorList>
            <person name="Williamson M.P."/>
            <person name="Madison V.S."/>
        </authorList>
    </citation>
    <scope>STRUCTURE BY NMR</scope>
    <scope>DISULFIDE BONDS</scope>
</reference>
<keyword id="KW-0002">3D-structure</keyword>
<keyword id="KW-0179">Complement alternate pathway</keyword>
<keyword id="KW-0180">Complement pathway</keyword>
<keyword id="KW-0903">Direct protein sequencing</keyword>
<keyword id="KW-1015">Disulfide bond</keyword>
<keyword id="KW-0391">Immunity</keyword>
<keyword id="KW-0395">Inflammatory response</keyword>
<keyword id="KW-0399">Innate immunity</keyword>
<keyword id="KW-1185">Reference proteome</keyword>
<keyword id="KW-0964">Secreted</keyword>
<gene>
    <name type="primary">C5</name>
</gene>